<feature type="chain" id="PRO_0000292668" description="Nuclear factor interleukin-3-regulated protein">
    <location>
        <begin position="1"/>
        <end position="462"/>
    </location>
</feature>
<feature type="domain" description="bZIP" evidence="2">
    <location>
        <begin position="73"/>
        <end position="136"/>
    </location>
</feature>
<feature type="region of interest" description="Disordered" evidence="3">
    <location>
        <begin position="1"/>
        <end position="22"/>
    </location>
</feature>
<feature type="region of interest" description="Basic motif" evidence="2">
    <location>
        <begin position="79"/>
        <end position="95"/>
    </location>
</feature>
<feature type="region of interest" description="Leucine-zipper" evidence="2">
    <location>
        <begin position="99"/>
        <end position="106"/>
    </location>
</feature>
<feature type="region of interest" description="Disordered" evidence="3">
    <location>
        <begin position="188"/>
        <end position="214"/>
    </location>
</feature>
<feature type="region of interest" description="Disordered" evidence="3">
    <location>
        <begin position="259"/>
        <end position="298"/>
    </location>
</feature>
<feature type="region of interest" description="Necessary for transcriptional repression and sufficient for interaction with PER2" evidence="8">
    <location>
        <begin position="281"/>
        <end position="420"/>
    </location>
</feature>
<feature type="compositionally biased region" description="Polar residues" evidence="3">
    <location>
        <begin position="265"/>
        <end position="274"/>
    </location>
</feature>
<feature type="modified residue" description="Phosphoserine" evidence="1">
    <location>
        <position position="301"/>
    </location>
</feature>
<feature type="modified residue" description="Phosphoserine" evidence="1">
    <location>
        <position position="353"/>
    </location>
</feature>
<feature type="cross-link" description="Glycyl lysine isopeptide (Lys-Gly) (interchain with G-Cter in SUMO2)" evidence="1">
    <location>
        <position position="24"/>
    </location>
</feature>
<feature type="cross-link" description="Glycyl lysine isopeptide (Lys-Gly) (interchain with G-Cter in SUMO2)" evidence="1">
    <location>
        <position position="214"/>
    </location>
</feature>
<feature type="cross-link" description="Glycyl lysine isopeptide (Lys-Gly) (interchain with G-Cter in SUMO1); alternate" evidence="1">
    <location>
        <position position="219"/>
    </location>
</feature>
<feature type="cross-link" description="Glycyl lysine isopeptide (Lys-Gly) (interchain with G-Cter in SUMO2); alternate" evidence="1">
    <location>
        <position position="219"/>
    </location>
</feature>
<feature type="cross-link" description="Glycyl lysine isopeptide (Lys-Gly) (interchain with G-Cter in SUMO2)" evidence="1">
    <location>
        <position position="314"/>
    </location>
</feature>
<feature type="cross-link" description="Glycyl lysine isopeptide (Lys-Gly) (interchain with G-Cter in SUMO2)" evidence="1">
    <location>
        <position position="326"/>
    </location>
</feature>
<feature type="cross-link" description="Glycyl lysine isopeptide (Lys-Gly) (interchain with G-Cter in SUMO2)" evidence="1">
    <location>
        <position position="332"/>
    </location>
</feature>
<feature type="cross-link" description="Glycyl lysine isopeptide (Lys-Gly) (interchain with G-Cter in SUMO2)" evidence="1">
    <location>
        <position position="337"/>
    </location>
</feature>
<feature type="cross-link" description="Glycyl lysine isopeptide (Lys-Gly) (interchain with G-Cter in SUMO2)" evidence="1">
    <location>
        <position position="350"/>
    </location>
</feature>
<feature type="cross-link" description="Glycyl lysine isopeptide (Lys-Gly) (interchain with G-Cter in SUMO2)" evidence="1">
    <location>
        <position position="360"/>
    </location>
</feature>
<feature type="cross-link" description="Glycyl lysine isopeptide (Lys-Gly) (interchain with G-Cter in SUMO2)" evidence="1">
    <location>
        <position position="394"/>
    </location>
</feature>
<feature type="cross-link" description="Glycyl lysine isopeptide (Lys-Gly) (interchain with G-Cter in SUMO2)" evidence="1">
    <location>
        <position position="401"/>
    </location>
</feature>
<feature type="cross-link" description="Glycyl lysine isopeptide (Lys-Gly) (interchain with G-Cter in SUMO2)" evidence="1">
    <location>
        <position position="406"/>
    </location>
</feature>
<feature type="cross-link" description="Glycyl lysine isopeptide (Lys-Gly) (interchain with G-Cter in SUMO2)" evidence="1">
    <location>
        <position position="412"/>
    </location>
</feature>
<feature type="cross-link" description="Glycyl lysine isopeptide (Lys-Gly) (interchain with G-Cter in SUMO2)" evidence="1">
    <location>
        <position position="419"/>
    </location>
</feature>
<feature type="cross-link" description="Glycyl lysine isopeptide (Lys-Gly) (interchain with G-Cter in SUMO2)" evidence="1">
    <location>
        <position position="424"/>
    </location>
</feature>
<feature type="cross-link" description="Glycyl lysine isopeptide (Lys-Gly) (interchain with G-Cter in SUMO2)" evidence="1">
    <location>
        <position position="434"/>
    </location>
</feature>
<feature type="cross-link" description="Glycyl lysine isopeptide (Lys-Gly) (interchain with G-Cter in SUMO2)" evidence="1">
    <location>
        <position position="448"/>
    </location>
</feature>
<feature type="sequence conflict" description="In Ref. 3; BAE26446." evidence="13" ref="3">
    <original>L</original>
    <variation>F</variation>
    <location>
        <position position="101"/>
    </location>
</feature>
<feature type="sequence conflict" description="In Ref. 4; AAI00385." evidence="13" ref="4">
    <original>L</original>
    <variation>F</variation>
    <location>
        <position position="141"/>
    </location>
</feature>
<feature type="sequence conflict" description="In Ref. 4; AAI00385." evidence="13" ref="4">
    <original>D</original>
    <variation>G</variation>
    <location>
        <position position="189"/>
    </location>
</feature>
<feature type="sequence conflict" description="In Ref. 3; BAE26446." evidence="13" ref="3">
    <original>F</original>
    <variation>V</variation>
    <location>
        <position position="450"/>
    </location>
</feature>
<sequence>MQLRKMQTIKKEPAPLDPTSSSDKMLLLNSALAEVAEDLASGEDLLLNEGSMGKNKSSACRRKREFIPDEKKDAMYWEKRRKNNEAAKRSREKRRLNDLVLENKLIALGEENATLKAELLSLKLKFGLISSTAYAQEIQKLSNSTAVYFQDYQTSKAAVSSFVDEHEPAMVAGSCISVIKHSPQSSLSDVSEVSSVEHTQESPAQGGCRSPENKFPVIKQEPVELESFAREAREERGTYSTSIYQSYMGSSFSTYSHSPPLLQVHGSTSNSPRTSEADEGVVGKSSDGEDEQQVPKGPIHSPVELQRVHATVVKVPEVNPSALPHKLRIKAKAMQVKVEALDSEFEGMQKLSSPADAIAKRHFDLEKHGTSGMAHSSLPPFSVQVTNIQDWSLKSEHWHHKELSSKTQSSFKTGVVEVKDGGYKVSEAENLYLKQGIANLSAEVVSLKRFIATQPISASDSR</sequence>
<name>NFIL3_MOUSE</name>
<organism>
    <name type="scientific">Mus musculus</name>
    <name type="common">Mouse</name>
    <dbReference type="NCBI Taxonomy" id="10090"/>
    <lineage>
        <taxon>Eukaryota</taxon>
        <taxon>Metazoa</taxon>
        <taxon>Chordata</taxon>
        <taxon>Craniata</taxon>
        <taxon>Vertebrata</taxon>
        <taxon>Euteleostomi</taxon>
        <taxon>Mammalia</taxon>
        <taxon>Eutheria</taxon>
        <taxon>Euarchontoglires</taxon>
        <taxon>Glires</taxon>
        <taxon>Rodentia</taxon>
        <taxon>Myomorpha</taxon>
        <taxon>Muroidea</taxon>
        <taxon>Muridae</taxon>
        <taxon>Murinae</taxon>
        <taxon>Mus</taxon>
        <taxon>Mus</taxon>
    </lineage>
</organism>
<evidence type="ECO:0000250" key="1">
    <source>
        <dbReference type="UniProtKB" id="Q16649"/>
    </source>
</evidence>
<evidence type="ECO:0000255" key="2">
    <source>
        <dbReference type="PROSITE-ProRule" id="PRU00978"/>
    </source>
</evidence>
<evidence type="ECO:0000256" key="3">
    <source>
        <dbReference type="SAM" id="MobiDB-lite"/>
    </source>
</evidence>
<evidence type="ECO:0000269" key="4">
    <source>
    </source>
</evidence>
<evidence type="ECO:0000269" key="5">
    <source>
    </source>
</evidence>
<evidence type="ECO:0000269" key="6">
    <source>
    </source>
</evidence>
<evidence type="ECO:0000269" key="7">
    <source>
    </source>
</evidence>
<evidence type="ECO:0000269" key="8">
    <source>
    </source>
</evidence>
<evidence type="ECO:0000269" key="9">
    <source>
    </source>
</evidence>
<evidence type="ECO:0000269" key="10">
    <source>
    </source>
</evidence>
<evidence type="ECO:0000269" key="11">
    <source>
    </source>
</evidence>
<evidence type="ECO:0000269" key="12">
    <source>
    </source>
</evidence>
<evidence type="ECO:0000305" key="13"/>
<gene>
    <name type="primary">Nfil3</name>
    <name type="synonym">E4bp4</name>
</gene>
<keyword id="KW-0010">Activator</keyword>
<keyword id="KW-0090">Biological rhythms</keyword>
<keyword id="KW-0238">DNA-binding</keyword>
<keyword id="KW-1017">Isopeptide bond</keyword>
<keyword id="KW-0539">Nucleus</keyword>
<keyword id="KW-0597">Phosphoprotein</keyword>
<keyword id="KW-1185">Reference proteome</keyword>
<keyword id="KW-0678">Repressor</keyword>
<keyword id="KW-0804">Transcription</keyword>
<keyword id="KW-0805">Transcription regulation</keyword>
<keyword id="KW-0832">Ubl conjugation</keyword>
<accession>O08750</accession>
<accession>Q3ULK2</accession>
<accession>Q497U0</accession>
<comment type="function">
    <text evidence="1 4 6 7 9 10 11 12">Acts as a transcriptional regulator that recognizes and binds to the sequence 5'-[GA]TTA[CT]GTAA[CT]-3', a sequence present in many cellular and viral promoters. Represses transcription from promoters with activating transcription factor (ATF) sites (By similarity). Represses promoter activity in osteoblasts. Represses transcriptional activity of PER1. Represses transcriptional activity of PER2 via the B-site on the promoter. Activates transcription from the interleukin-3 promoter in T-cells (By similarity). Competes for the same consensus-binding site with PAR DNA-binding factors (DBP, HLF and TEF). Component of the circadian clock that acts as a negative regulator for the circadian expression of PER2 oscillation in the cell-autonomous core clock. Protects pro-B cells from programmed cell death. Represses the transcription of CYP2A5 (PubMed:30555544). Positively regulates the expression and activity of CES2 by antagonizing the repressive action of NR1D1 on CES2 (PubMed:29653076). Required for the development of natural killer cell precursors (PubMed:32190943).</text>
</comment>
<comment type="subunit">
    <text evidence="1 8 9 10">Homodimer (By similarity). Binds DNA as a dimer (By similarity). Interacts with DR1 (By similarity). Interacts with PER2 and CRY2 (PubMed:17274955). Interacts with NR0B2 (PubMed:30555544). Interacts with NR1D1 (PubMed:29653076). Interacts with MYSM1 (By similarity).</text>
</comment>
<comment type="subcellular location">
    <subcellularLocation>
        <location evidence="2 4">Nucleus</location>
    </subcellularLocation>
</comment>
<comment type="tissue specificity">
    <text evidence="4 5 11">Expressed in suprachiasmatic nucleus and liver (at protein level). Expressed in suprachiasmatic nucleus, hippocampus, gyrus dentatus, piriform cortex, internal granular layer of olfactory bulb, dorsomedial hypothalamic nucleus, pontine nuclei, granular layer of cerebellum, liver and calvariae osteoblasts. Expressed in natural killer cell precursors in bone marrow (PubMed:32190943).</text>
</comment>
<comment type="induction">
    <text evidence="5 6 12">Expression is regulated by circadian rhythms. Up-regulated by parathyroid hormone (PTH) (at protein level). Up-regulated by IL-3, forskolin, 8-bromo-cAMP, phorbol myristate acetate and PTH in primary osteoblasts and calvariae.</text>
</comment>
<comment type="disruption phenotype">
    <text evidence="11">Reduced number of natural killer cell-committed progenitors in bone marrow.</text>
</comment>
<comment type="similarity">
    <text evidence="13">Belongs to the bZIP family. NFIL3 subfamily.</text>
</comment>
<dbReference type="EMBL" id="U83148">
    <property type="protein sequence ID" value="AAB53973.1"/>
    <property type="molecule type" value="Genomic_DNA"/>
</dbReference>
<dbReference type="EMBL" id="AY061760">
    <property type="protein sequence ID" value="AAL29942.1"/>
    <property type="molecule type" value="mRNA"/>
</dbReference>
<dbReference type="EMBL" id="AK145451">
    <property type="protein sequence ID" value="BAE26446.1"/>
    <property type="molecule type" value="mRNA"/>
</dbReference>
<dbReference type="EMBL" id="BC031377">
    <property type="protein sequence ID" value="AAH31377.1"/>
    <property type="molecule type" value="mRNA"/>
</dbReference>
<dbReference type="EMBL" id="BC100384">
    <property type="protein sequence ID" value="AAI00385.1"/>
    <property type="molecule type" value="mRNA"/>
</dbReference>
<dbReference type="CCDS" id="CCDS26519.1"/>
<dbReference type="RefSeq" id="NP_059069.1">
    <property type="nucleotide sequence ID" value="NM_017373.3"/>
</dbReference>
<dbReference type="RefSeq" id="XP_006516940.1">
    <property type="nucleotide sequence ID" value="XM_006516877.3"/>
</dbReference>
<dbReference type="RefSeq" id="XP_011242681.1">
    <property type="nucleotide sequence ID" value="XM_011244379.1"/>
</dbReference>
<dbReference type="RefSeq" id="XP_017170907.1">
    <property type="nucleotide sequence ID" value="XM_017315418.2"/>
</dbReference>
<dbReference type="RefSeq" id="XP_036013796.1">
    <property type="nucleotide sequence ID" value="XM_036157903.1"/>
</dbReference>
<dbReference type="SMR" id="O08750"/>
<dbReference type="BioGRID" id="201749">
    <property type="interactions" value="1"/>
</dbReference>
<dbReference type="FunCoup" id="O08750">
    <property type="interactions" value="1249"/>
</dbReference>
<dbReference type="IntAct" id="O08750">
    <property type="interactions" value="1"/>
</dbReference>
<dbReference type="MINT" id="O08750"/>
<dbReference type="STRING" id="10090.ENSMUSP00000065363"/>
<dbReference type="iPTMnet" id="O08750"/>
<dbReference type="PhosphoSitePlus" id="O08750"/>
<dbReference type="jPOST" id="O08750"/>
<dbReference type="PaxDb" id="10090-ENSMUSP00000065363"/>
<dbReference type="PeptideAtlas" id="O08750"/>
<dbReference type="ProteomicsDB" id="293550"/>
<dbReference type="Antibodypedia" id="926">
    <property type="antibodies" value="382 antibodies from 39 providers"/>
</dbReference>
<dbReference type="DNASU" id="18030"/>
<dbReference type="Ensembl" id="ENSMUST00000071065.8">
    <property type="protein sequence ID" value="ENSMUSP00000065363.8"/>
    <property type="gene ID" value="ENSMUSG00000056749.8"/>
</dbReference>
<dbReference type="GeneID" id="18030"/>
<dbReference type="KEGG" id="mmu:18030"/>
<dbReference type="UCSC" id="uc007qnh.1">
    <property type="organism name" value="mouse"/>
</dbReference>
<dbReference type="AGR" id="MGI:109495"/>
<dbReference type="CTD" id="4783"/>
<dbReference type="MGI" id="MGI:109495">
    <property type="gene designation" value="Nfil3"/>
</dbReference>
<dbReference type="VEuPathDB" id="HostDB:ENSMUSG00000056749"/>
<dbReference type="eggNOG" id="KOG3119">
    <property type="taxonomic scope" value="Eukaryota"/>
</dbReference>
<dbReference type="GeneTree" id="ENSGT00940000160540"/>
<dbReference type="HOGENOM" id="CLU_052045_0_0_1"/>
<dbReference type="InParanoid" id="O08750"/>
<dbReference type="OMA" id="PVDMTSK"/>
<dbReference type="OrthoDB" id="6151507at2759"/>
<dbReference type="PhylomeDB" id="O08750"/>
<dbReference type="TreeFam" id="TF328374"/>
<dbReference type="BioGRID-ORCS" id="18030">
    <property type="hits" value="2 hits in 80 CRISPR screens"/>
</dbReference>
<dbReference type="ChiTaRS" id="Nfil3">
    <property type="organism name" value="mouse"/>
</dbReference>
<dbReference type="PRO" id="PR:O08750"/>
<dbReference type="Proteomes" id="UP000000589">
    <property type="component" value="Chromosome 13"/>
</dbReference>
<dbReference type="RNAct" id="O08750">
    <property type="molecule type" value="protein"/>
</dbReference>
<dbReference type="Bgee" id="ENSMUSG00000056749">
    <property type="expression patterns" value="Expressed in hindlimb stylopod muscle and 216 other cell types or tissues"/>
</dbReference>
<dbReference type="GO" id="GO:0090575">
    <property type="term" value="C:RNA polymerase II transcription regulator complex"/>
    <property type="evidence" value="ECO:0007669"/>
    <property type="project" value="Ensembl"/>
</dbReference>
<dbReference type="GO" id="GO:0001227">
    <property type="term" value="F:DNA-binding transcription repressor activity, RNA polymerase II-specific"/>
    <property type="evidence" value="ECO:0007669"/>
    <property type="project" value="Ensembl"/>
</dbReference>
<dbReference type="GO" id="GO:0042802">
    <property type="term" value="F:identical protein binding"/>
    <property type="evidence" value="ECO:0007669"/>
    <property type="project" value="Ensembl"/>
</dbReference>
<dbReference type="GO" id="GO:0000978">
    <property type="term" value="F:RNA polymerase II cis-regulatory region sequence-specific DNA binding"/>
    <property type="evidence" value="ECO:0000314"/>
    <property type="project" value="MGI"/>
</dbReference>
<dbReference type="GO" id="GO:0071353">
    <property type="term" value="P:cellular response to interleukin-4"/>
    <property type="evidence" value="ECO:0000314"/>
    <property type="project" value="MGI"/>
</dbReference>
<dbReference type="GO" id="GO:0007623">
    <property type="term" value="P:circadian rhythm"/>
    <property type="evidence" value="ECO:0007669"/>
    <property type="project" value="InterPro"/>
</dbReference>
<dbReference type="GO" id="GO:0006955">
    <property type="term" value="P:immune response"/>
    <property type="evidence" value="ECO:0007669"/>
    <property type="project" value="InterPro"/>
</dbReference>
<dbReference type="GO" id="GO:0001779">
    <property type="term" value="P:natural killer cell differentiation"/>
    <property type="evidence" value="ECO:0000315"/>
    <property type="project" value="UniProtKB"/>
</dbReference>
<dbReference type="GO" id="GO:0045892">
    <property type="term" value="P:negative regulation of DNA-templated transcription"/>
    <property type="evidence" value="ECO:0000314"/>
    <property type="project" value="UniProtKB"/>
</dbReference>
<dbReference type="GO" id="GO:0045893">
    <property type="term" value="P:positive regulation of DNA-templated transcription"/>
    <property type="evidence" value="ECO:0000315"/>
    <property type="project" value="UniProtKB"/>
</dbReference>
<dbReference type="GO" id="GO:0010628">
    <property type="term" value="P:positive regulation of gene expression"/>
    <property type="evidence" value="ECO:0000314"/>
    <property type="project" value="MGI"/>
</dbReference>
<dbReference type="GO" id="GO:0006366">
    <property type="term" value="P:transcription by RNA polymerase II"/>
    <property type="evidence" value="ECO:0007669"/>
    <property type="project" value="InterPro"/>
</dbReference>
<dbReference type="CDD" id="cd14694">
    <property type="entry name" value="bZIP_NFIL3"/>
    <property type="match status" value="1"/>
</dbReference>
<dbReference type="FunFam" id="1.20.5.170:FF:000025">
    <property type="entry name" value="nuclear factor interleukin-3-regulated protein-like"/>
    <property type="match status" value="1"/>
</dbReference>
<dbReference type="Gene3D" id="1.20.5.170">
    <property type="match status" value="1"/>
</dbReference>
<dbReference type="InterPro" id="IPR004827">
    <property type="entry name" value="bZIP"/>
</dbReference>
<dbReference type="InterPro" id="IPR046347">
    <property type="entry name" value="bZIP_sf"/>
</dbReference>
<dbReference type="InterPro" id="IPR047229">
    <property type="entry name" value="NFIL3-like"/>
</dbReference>
<dbReference type="InterPro" id="IPR047106">
    <property type="entry name" value="NFIL3-like_bZIP"/>
</dbReference>
<dbReference type="InterPro" id="IPR016743">
    <property type="entry name" value="NFIL3/E4BP4"/>
</dbReference>
<dbReference type="InterPro" id="IPR010533">
    <property type="entry name" value="Vert_IL3-reg_TF"/>
</dbReference>
<dbReference type="PANTHER" id="PTHR15284">
    <property type="entry name" value="NUCLEAR FACTOR INTERLEUKIN-3-REGULATED PROTEIN"/>
    <property type="match status" value="1"/>
</dbReference>
<dbReference type="PANTHER" id="PTHR15284:SF1">
    <property type="entry name" value="NUCLEAR FACTOR INTERLEUKIN-3-REGULATED PROTEIN"/>
    <property type="match status" value="1"/>
</dbReference>
<dbReference type="Pfam" id="PF07716">
    <property type="entry name" value="bZIP_2"/>
    <property type="match status" value="1"/>
</dbReference>
<dbReference type="Pfam" id="PF06529">
    <property type="entry name" value="Vert_IL3-reg_TF"/>
    <property type="match status" value="1"/>
</dbReference>
<dbReference type="PIRSF" id="PIRSF019029">
    <property type="entry name" value="bZIP_E4BP4"/>
    <property type="match status" value="1"/>
</dbReference>
<dbReference type="SMART" id="SM00338">
    <property type="entry name" value="BRLZ"/>
    <property type="match status" value="1"/>
</dbReference>
<dbReference type="SUPFAM" id="SSF57959">
    <property type="entry name" value="Leucine zipper domain"/>
    <property type="match status" value="1"/>
</dbReference>
<dbReference type="PROSITE" id="PS50217">
    <property type="entry name" value="BZIP"/>
    <property type="match status" value="1"/>
</dbReference>
<dbReference type="PROSITE" id="PS00036">
    <property type="entry name" value="BZIP_BASIC"/>
    <property type="match status" value="1"/>
</dbReference>
<proteinExistence type="evidence at protein level"/>
<protein>
    <recommendedName>
        <fullName>Nuclear factor interleukin-3-regulated protein</fullName>
    </recommendedName>
    <alternativeName>
        <fullName>E4 promoter-binding protein 4</fullName>
    </alternativeName>
    <alternativeName>
        <fullName>Embryo implantation-related NFIL3/E4BP4-like transcription factor</fullName>
    </alternativeName>
</protein>
<reference key="1">
    <citation type="journal article" date="1997" name="Proc. Natl. Acad. Sci. U.S.A.">
        <title>Pivotal role for the NFIL3/E4BP4 transcription factor in interleukin 3-mediated survival of pro-B lymphocytes.</title>
        <authorList>
            <person name="Ikushima S."/>
            <person name="Inukai T."/>
            <person name="Inaba T."/>
            <person name="Nimer S.D."/>
            <person name="Cleveland J.L."/>
            <person name="Look A.T."/>
        </authorList>
    </citation>
    <scope>NUCLEOTIDE SEQUENCE [GENOMIC DNA]</scope>
    <scope>FUNCTION</scope>
    <scope>INDUCTION</scope>
    <scope>DNA-BINDING</scope>
</reference>
<reference key="2">
    <citation type="submission" date="2001-11" db="EMBL/GenBank/DDBJ databases">
        <title>Identification of novel endometrial factors involved in the mouse embryo implantation.</title>
        <authorList>
            <person name="Shen Q.-X."/>
            <person name="Wang J."/>
            <person name="Huang Z.-P."/>
        </authorList>
    </citation>
    <scope>NUCLEOTIDE SEQUENCE [MRNA]</scope>
    <source>
        <strain>BALB/cJ</strain>
        <tissue>Embryo</tissue>
        <tissue>Uterus</tissue>
    </source>
</reference>
<reference key="3">
    <citation type="journal article" date="2005" name="Science">
        <title>The transcriptional landscape of the mammalian genome.</title>
        <authorList>
            <person name="Carninci P."/>
            <person name="Kasukawa T."/>
            <person name="Katayama S."/>
            <person name="Gough J."/>
            <person name="Frith M.C."/>
            <person name="Maeda N."/>
            <person name="Oyama R."/>
            <person name="Ravasi T."/>
            <person name="Lenhard B."/>
            <person name="Wells C."/>
            <person name="Kodzius R."/>
            <person name="Shimokawa K."/>
            <person name="Bajic V.B."/>
            <person name="Brenner S.E."/>
            <person name="Batalov S."/>
            <person name="Forrest A.R."/>
            <person name="Zavolan M."/>
            <person name="Davis M.J."/>
            <person name="Wilming L.G."/>
            <person name="Aidinis V."/>
            <person name="Allen J.E."/>
            <person name="Ambesi-Impiombato A."/>
            <person name="Apweiler R."/>
            <person name="Aturaliya R.N."/>
            <person name="Bailey T.L."/>
            <person name="Bansal M."/>
            <person name="Baxter L."/>
            <person name="Beisel K.W."/>
            <person name="Bersano T."/>
            <person name="Bono H."/>
            <person name="Chalk A.M."/>
            <person name="Chiu K.P."/>
            <person name="Choudhary V."/>
            <person name="Christoffels A."/>
            <person name="Clutterbuck D.R."/>
            <person name="Crowe M.L."/>
            <person name="Dalla E."/>
            <person name="Dalrymple B.P."/>
            <person name="de Bono B."/>
            <person name="Della Gatta G."/>
            <person name="di Bernardo D."/>
            <person name="Down T."/>
            <person name="Engstrom P."/>
            <person name="Fagiolini M."/>
            <person name="Faulkner G."/>
            <person name="Fletcher C.F."/>
            <person name="Fukushima T."/>
            <person name="Furuno M."/>
            <person name="Futaki S."/>
            <person name="Gariboldi M."/>
            <person name="Georgii-Hemming P."/>
            <person name="Gingeras T.R."/>
            <person name="Gojobori T."/>
            <person name="Green R.E."/>
            <person name="Gustincich S."/>
            <person name="Harbers M."/>
            <person name="Hayashi Y."/>
            <person name="Hensch T.K."/>
            <person name="Hirokawa N."/>
            <person name="Hill D."/>
            <person name="Huminiecki L."/>
            <person name="Iacono M."/>
            <person name="Ikeo K."/>
            <person name="Iwama A."/>
            <person name="Ishikawa T."/>
            <person name="Jakt M."/>
            <person name="Kanapin A."/>
            <person name="Katoh M."/>
            <person name="Kawasawa Y."/>
            <person name="Kelso J."/>
            <person name="Kitamura H."/>
            <person name="Kitano H."/>
            <person name="Kollias G."/>
            <person name="Krishnan S.P."/>
            <person name="Kruger A."/>
            <person name="Kummerfeld S.K."/>
            <person name="Kurochkin I.V."/>
            <person name="Lareau L.F."/>
            <person name="Lazarevic D."/>
            <person name="Lipovich L."/>
            <person name="Liu J."/>
            <person name="Liuni S."/>
            <person name="McWilliam S."/>
            <person name="Madan Babu M."/>
            <person name="Madera M."/>
            <person name="Marchionni L."/>
            <person name="Matsuda H."/>
            <person name="Matsuzawa S."/>
            <person name="Miki H."/>
            <person name="Mignone F."/>
            <person name="Miyake S."/>
            <person name="Morris K."/>
            <person name="Mottagui-Tabar S."/>
            <person name="Mulder N."/>
            <person name="Nakano N."/>
            <person name="Nakauchi H."/>
            <person name="Ng P."/>
            <person name="Nilsson R."/>
            <person name="Nishiguchi S."/>
            <person name="Nishikawa S."/>
            <person name="Nori F."/>
            <person name="Ohara O."/>
            <person name="Okazaki Y."/>
            <person name="Orlando V."/>
            <person name="Pang K.C."/>
            <person name="Pavan W.J."/>
            <person name="Pavesi G."/>
            <person name="Pesole G."/>
            <person name="Petrovsky N."/>
            <person name="Piazza S."/>
            <person name="Reed J."/>
            <person name="Reid J.F."/>
            <person name="Ring B.Z."/>
            <person name="Ringwald M."/>
            <person name="Rost B."/>
            <person name="Ruan Y."/>
            <person name="Salzberg S.L."/>
            <person name="Sandelin A."/>
            <person name="Schneider C."/>
            <person name="Schoenbach C."/>
            <person name="Sekiguchi K."/>
            <person name="Semple C.A."/>
            <person name="Seno S."/>
            <person name="Sessa L."/>
            <person name="Sheng Y."/>
            <person name="Shibata Y."/>
            <person name="Shimada H."/>
            <person name="Shimada K."/>
            <person name="Silva D."/>
            <person name="Sinclair B."/>
            <person name="Sperling S."/>
            <person name="Stupka E."/>
            <person name="Sugiura K."/>
            <person name="Sultana R."/>
            <person name="Takenaka Y."/>
            <person name="Taki K."/>
            <person name="Tammoja K."/>
            <person name="Tan S.L."/>
            <person name="Tang S."/>
            <person name="Taylor M.S."/>
            <person name="Tegner J."/>
            <person name="Teichmann S.A."/>
            <person name="Ueda H.R."/>
            <person name="van Nimwegen E."/>
            <person name="Verardo R."/>
            <person name="Wei C.L."/>
            <person name="Yagi K."/>
            <person name="Yamanishi H."/>
            <person name="Zabarovsky E."/>
            <person name="Zhu S."/>
            <person name="Zimmer A."/>
            <person name="Hide W."/>
            <person name="Bult C."/>
            <person name="Grimmond S.M."/>
            <person name="Teasdale R.D."/>
            <person name="Liu E.T."/>
            <person name="Brusic V."/>
            <person name="Quackenbush J."/>
            <person name="Wahlestedt C."/>
            <person name="Mattick J.S."/>
            <person name="Hume D.A."/>
            <person name="Kai C."/>
            <person name="Sasaki D."/>
            <person name="Tomaru Y."/>
            <person name="Fukuda S."/>
            <person name="Kanamori-Katayama M."/>
            <person name="Suzuki M."/>
            <person name="Aoki J."/>
            <person name="Arakawa T."/>
            <person name="Iida J."/>
            <person name="Imamura K."/>
            <person name="Itoh M."/>
            <person name="Kato T."/>
            <person name="Kawaji H."/>
            <person name="Kawagashira N."/>
            <person name="Kawashima T."/>
            <person name="Kojima M."/>
            <person name="Kondo S."/>
            <person name="Konno H."/>
            <person name="Nakano K."/>
            <person name="Ninomiya N."/>
            <person name="Nishio T."/>
            <person name="Okada M."/>
            <person name="Plessy C."/>
            <person name="Shibata K."/>
            <person name="Shiraki T."/>
            <person name="Suzuki S."/>
            <person name="Tagami M."/>
            <person name="Waki K."/>
            <person name="Watahiki A."/>
            <person name="Okamura-Oho Y."/>
            <person name="Suzuki H."/>
            <person name="Kawai J."/>
            <person name="Hayashizaki Y."/>
        </authorList>
    </citation>
    <scope>NUCLEOTIDE SEQUENCE [LARGE SCALE MRNA]</scope>
    <source>
        <strain>C57BL/6J</strain>
    </source>
</reference>
<reference key="4">
    <citation type="journal article" date="2004" name="Genome Res.">
        <title>The status, quality, and expansion of the NIH full-length cDNA project: the Mammalian Gene Collection (MGC).</title>
        <authorList>
            <consortium name="The MGC Project Team"/>
        </authorList>
    </citation>
    <scope>NUCLEOTIDE SEQUENCE [LARGE SCALE MRNA]</scope>
    <source>
        <strain>C57BL/6J</strain>
        <strain>FVB/N</strain>
        <tissue>Egg</tissue>
        <tissue>Mammary tumor</tissue>
    </source>
</reference>
<reference key="5">
    <citation type="journal article" date="2001" name="Genes Dev.">
        <title>Antagonistic role of E4BP4 and PAR proteins in the circadian oscillatory mechanism.</title>
        <authorList>
            <person name="Mitsui S."/>
            <person name="Yamaguchi S."/>
            <person name="Matsuo T."/>
            <person name="Ishida Y."/>
            <person name="Okamura H."/>
        </authorList>
    </citation>
    <scope>FUNCTION</scope>
    <scope>DNA-BINDING</scope>
    <scope>SUBCELLULAR LOCATION</scope>
    <scope>TISSUE SPECIFICITY</scope>
</reference>
<reference key="6">
    <citation type="journal article" date="2003" name="J. Biol. Chem.">
        <title>Parathyroid hormone-induced E4BP4/NFIL3 down-regulates transcription in osteoblasts.</title>
        <authorList>
            <person name="Ozkurt I.C."/>
            <person name="Tetradis S."/>
        </authorList>
    </citation>
    <scope>INDUCTION</scope>
    <scope>TISSUE SPECIFICITY</scope>
</reference>
<reference key="7">
    <citation type="journal article" date="2004" name="Endocrinology">
        <title>Parathyroid hormone induces E4bp4 messenger ribonucleic acid expression primarily through cyclic adenosine 3',5'-monophosphate signaling in osteoblasts.</title>
        <authorList>
            <person name="Ozkurt I.C."/>
            <person name="Pirih F.Q."/>
            <person name="Tetradis S."/>
        </authorList>
    </citation>
    <scope>FUNCTION</scope>
    <scope>INDUCTION</scope>
    <scope>DNA-BINDING</scope>
</reference>
<reference key="8">
    <citation type="journal article" date="2007" name="Biochem. Biophys. Res. Commun.">
        <title>The negative transcription factor E4BP4 is associated with circadian clock protein PERIOD2.</title>
        <authorList>
            <person name="Ohno T."/>
            <person name="Onishi Y."/>
            <person name="Ishida N."/>
        </authorList>
    </citation>
    <scope>INTERACTION WITH PER2 AND CRY2</scope>
</reference>
<reference key="9">
    <citation type="journal article" date="2007" name="Nucleic Acids Res.">
        <title>A novel E4BP4 element drives circadian expression of mPeriod2.</title>
        <authorList>
            <person name="Ohno T."/>
            <person name="Onishi Y."/>
            <person name="Ishida N."/>
        </authorList>
    </citation>
    <scope>FUNCTION</scope>
    <scope>DNA-BINDING</scope>
</reference>
<reference key="10">
    <citation type="journal article" date="2007" name="Proc. Natl. Acad. Sci. U.S.A.">
        <title>Large-scale phosphorylation analysis of mouse liver.</title>
        <authorList>
            <person name="Villen J."/>
            <person name="Beausoleil S.A."/>
            <person name="Gerber S.A."/>
            <person name="Gygi S.P."/>
        </authorList>
    </citation>
    <scope>IDENTIFICATION BY MASS SPECTROMETRY [LARGE SCALE ANALYSIS]</scope>
    <source>
        <tissue>Liver</tissue>
    </source>
</reference>
<reference key="11">
    <citation type="journal article" date="2018" name="Biochem. Pharmacol.">
        <title>E4bp4 regulates carboxylesterase 2 enzymes through repression of the nuclear receptor Rev-erbalpha in mice.</title>
        <authorList>
            <person name="Zhao M."/>
            <person name="Zhang T."/>
            <person name="Yu F."/>
            <person name="Guo L."/>
            <person name="Wu B."/>
        </authorList>
    </citation>
    <scope>FUNCTION</scope>
    <scope>INTERACTION WITH NR1D1</scope>
</reference>
<reference key="12">
    <citation type="journal article" date="2018" name="Theranostics">
        <title>Small heterodimer partner regulates circadian cytochromes p450 and drug-induced hepatotoxicity.</title>
        <authorList>
            <person name="Zhang T."/>
            <person name="Yu F."/>
            <person name="Guo L."/>
            <person name="Chen M."/>
            <person name="Yuan X."/>
            <person name="Wu B."/>
        </authorList>
    </citation>
    <scope>FUNCTION</scope>
    <scope>INTERACTION WITH NR0B2</scope>
</reference>
<reference key="13">
    <citation type="journal article" date="2020" name="FASEB J.">
        <title>PBX1 promotes development of natural killer cells by binding directly to the Nfil3 promoter.</title>
        <authorList>
            <person name="Xu X."/>
            <person name="Zhou Y."/>
            <person name="Fu B."/>
            <person name="Zhang J."/>
            <person name="Dong Z."/>
            <person name="Zhang X."/>
            <person name="Shen N."/>
            <person name="Sun R."/>
            <person name="Tian Z."/>
            <person name="Wei H."/>
        </authorList>
    </citation>
    <scope>FUNCTION</scope>
    <scope>TISSUE SPECIFICITY</scope>
    <scope>DISRUPTION PHENOTYPE</scope>
</reference>